<name>TDH_BURVG</name>
<reference key="1">
    <citation type="submission" date="2007-03" db="EMBL/GenBank/DDBJ databases">
        <title>Complete sequence of chromosome 2 of Burkholderia vietnamiensis G4.</title>
        <authorList>
            <consortium name="US DOE Joint Genome Institute"/>
            <person name="Copeland A."/>
            <person name="Lucas S."/>
            <person name="Lapidus A."/>
            <person name="Barry K."/>
            <person name="Detter J.C."/>
            <person name="Glavina del Rio T."/>
            <person name="Hammon N."/>
            <person name="Israni S."/>
            <person name="Dalin E."/>
            <person name="Tice H."/>
            <person name="Pitluck S."/>
            <person name="Chain P."/>
            <person name="Malfatti S."/>
            <person name="Shin M."/>
            <person name="Vergez L."/>
            <person name="Schmutz J."/>
            <person name="Larimer F."/>
            <person name="Land M."/>
            <person name="Hauser L."/>
            <person name="Kyrpides N."/>
            <person name="Tiedje J."/>
            <person name="Richardson P."/>
        </authorList>
    </citation>
    <scope>NUCLEOTIDE SEQUENCE [LARGE SCALE GENOMIC DNA]</scope>
    <source>
        <strain>G4 / LMG 22486</strain>
    </source>
</reference>
<accession>A4JKG7</accession>
<sequence>MKALAKLERAPGLTLTRVKRPEVGHNDVLIKIRRTAICGTDIHIWKWDDWAQKTIPVPMHVGHEYVGEIVEMGQEVRGFAIGDRVSGEGHITCGFCRNCRAGRRHLCRNTVGVGVNREGAFAEYLAIPAFNAFKIPPEISDDLASIFDPFGNATHTALSFNLVGEDVLITGAGPIGIMAVAIAKHVGARNVVITDINDYRLELARKMGATRAVNVARESLRDVMAELRMTEGFDVGLEMSGVPSAFTSLLEAMNHGGKVALLGIPPAQTAIDWNQVIFKGLEIKGIYGREMFETWYKMVAMLQSGLDLSPIVTHRFAVDDYEKGFAAMLSGESGKVILDWTA</sequence>
<proteinExistence type="inferred from homology"/>
<comment type="function">
    <text evidence="1">Catalyzes the NAD(+)-dependent oxidation of L-threonine to 2-amino-3-ketobutyrate.</text>
</comment>
<comment type="catalytic activity">
    <reaction evidence="1">
        <text>L-threonine + NAD(+) = (2S)-2-amino-3-oxobutanoate + NADH + H(+)</text>
        <dbReference type="Rhea" id="RHEA:13161"/>
        <dbReference type="ChEBI" id="CHEBI:15378"/>
        <dbReference type="ChEBI" id="CHEBI:57540"/>
        <dbReference type="ChEBI" id="CHEBI:57926"/>
        <dbReference type="ChEBI" id="CHEBI:57945"/>
        <dbReference type="ChEBI" id="CHEBI:78948"/>
        <dbReference type="EC" id="1.1.1.103"/>
    </reaction>
</comment>
<comment type="cofactor">
    <cofactor evidence="1">
        <name>Zn(2+)</name>
        <dbReference type="ChEBI" id="CHEBI:29105"/>
    </cofactor>
    <text evidence="1">Binds 2 Zn(2+) ions per subunit.</text>
</comment>
<comment type="pathway">
    <text evidence="1">Amino-acid degradation; L-threonine degradation via oxydo-reductase pathway; glycine from L-threonine: step 1/2.</text>
</comment>
<comment type="subunit">
    <text evidence="1">Homotetramer.</text>
</comment>
<comment type="subcellular location">
    <subcellularLocation>
        <location evidence="1">Cytoplasm</location>
    </subcellularLocation>
</comment>
<comment type="similarity">
    <text evidence="1">Belongs to the zinc-containing alcohol dehydrogenase family.</text>
</comment>
<protein>
    <recommendedName>
        <fullName evidence="1">L-threonine 3-dehydrogenase</fullName>
        <shortName evidence="1">TDH</shortName>
        <ecNumber evidence="1">1.1.1.103</ecNumber>
    </recommendedName>
</protein>
<keyword id="KW-0963">Cytoplasm</keyword>
<keyword id="KW-0479">Metal-binding</keyword>
<keyword id="KW-0520">NAD</keyword>
<keyword id="KW-0560">Oxidoreductase</keyword>
<keyword id="KW-0862">Zinc</keyword>
<feature type="chain" id="PRO_1000051628" description="L-threonine 3-dehydrogenase">
    <location>
        <begin position="1"/>
        <end position="342"/>
    </location>
</feature>
<feature type="active site" description="Charge relay system" evidence="1">
    <location>
        <position position="40"/>
    </location>
</feature>
<feature type="active site" description="Charge relay system" evidence="1">
    <location>
        <position position="43"/>
    </location>
</feature>
<feature type="binding site" evidence="1">
    <location>
        <position position="38"/>
    </location>
    <ligand>
        <name>Zn(2+)</name>
        <dbReference type="ChEBI" id="CHEBI:29105"/>
        <label>1</label>
        <note>catalytic</note>
    </ligand>
</feature>
<feature type="binding site" evidence="1">
    <location>
        <position position="63"/>
    </location>
    <ligand>
        <name>Zn(2+)</name>
        <dbReference type="ChEBI" id="CHEBI:29105"/>
        <label>1</label>
        <note>catalytic</note>
    </ligand>
</feature>
<feature type="binding site" evidence="1">
    <location>
        <position position="64"/>
    </location>
    <ligand>
        <name>Zn(2+)</name>
        <dbReference type="ChEBI" id="CHEBI:29105"/>
        <label>1</label>
        <note>catalytic</note>
    </ligand>
</feature>
<feature type="binding site" evidence="1">
    <location>
        <position position="93"/>
    </location>
    <ligand>
        <name>Zn(2+)</name>
        <dbReference type="ChEBI" id="CHEBI:29105"/>
        <label>2</label>
    </ligand>
</feature>
<feature type="binding site" evidence="1">
    <location>
        <position position="96"/>
    </location>
    <ligand>
        <name>Zn(2+)</name>
        <dbReference type="ChEBI" id="CHEBI:29105"/>
        <label>2</label>
    </ligand>
</feature>
<feature type="binding site" evidence="1">
    <location>
        <position position="99"/>
    </location>
    <ligand>
        <name>Zn(2+)</name>
        <dbReference type="ChEBI" id="CHEBI:29105"/>
        <label>2</label>
    </ligand>
</feature>
<feature type="binding site" evidence="1">
    <location>
        <position position="107"/>
    </location>
    <ligand>
        <name>Zn(2+)</name>
        <dbReference type="ChEBI" id="CHEBI:29105"/>
        <label>2</label>
    </ligand>
</feature>
<feature type="binding site" evidence="1">
    <location>
        <position position="175"/>
    </location>
    <ligand>
        <name>NAD(+)</name>
        <dbReference type="ChEBI" id="CHEBI:57540"/>
    </ligand>
</feature>
<feature type="binding site" evidence="1">
    <location>
        <position position="195"/>
    </location>
    <ligand>
        <name>NAD(+)</name>
        <dbReference type="ChEBI" id="CHEBI:57540"/>
    </ligand>
</feature>
<feature type="binding site" evidence="1">
    <location>
        <position position="200"/>
    </location>
    <ligand>
        <name>NAD(+)</name>
        <dbReference type="ChEBI" id="CHEBI:57540"/>
    </ligand>
</feature>
<feature type="binding site" evidence="1">
    <location>
        <begin position="262"/>
        <end position="264"/>
    </location>
    <ligand>
        <name>NAD(+)</name>
        <dbReference type="ChEBI" id="CHEBI:57540"/>
    </ligand>
</feature>
<feature type="binding site" evidence="1">
    <location>
        <begin position="286"/>
        <end position="287"/>
    </location>
    <ligand>
        <name>NAD(+)</name>
        <dbReference type="ChEBI" id="CHEBI:57540"/>
    </ligand>
</feature>
<feature type="site" description="Important for catalytic activity for the proton relay mechanism but does not participate directly in the coordination of zinc atom" evidence="1">
    <location>
        <position position="148"/>
    </location>
</feature>
<gene>
    <name evidence="1" type="primary">tdh</name>
    <name type="ordered locus">Bcep1808_3787</name>
</gene>
<evidence type="ECO:0000255" key="1">
    <source>
        <dbReference type="HAMAP-Rule" id="MF_00627"/>
    </source>
</evidence>
<dbReference type="EC" id="1.1.1.103" evidence="1"/>
<dbReference type="EMBL" id="CP000615">
    <property type="protein sequence ID" value="ABO56770.1"/>
    <property type="molecule type" value="Genomic_DNA"/>
</dbReference>
<dbReference type="SMR" id="A4JKG7"/>
<dbReference type="KEGG" id="bvi:Bcep1808_3787"/>
<dbReference type="eggNOG" id="COG1063">
    <property type="taxonomic scope" value="Bacteria"/>
</dbReference>
<dbReference type="HOGENOM" id="CLU_026673_11_0_4"/>
<dbReference type="UniPathway" id="UPA00046">
    <property type="reaction ID" value="UER00505"/>
</dbReference>
<dbReference type="Proteomes" id="UP000002287">
    <property type="component" value="Chromosome 2"/>
</dbReference>
<dbReference type="GO" id="GO:0005737">
    <property type="term" value="C:cytoplasm"/>
    <property type="evidence" value="ECO:0007669"/>
    <property type="project" value="UniProtKB-SubCell"/>
</dbReference>
<dbReference type="GO" id="GO:0008743">
    <property type="term" value="F:L-threonine 3-dehydrogenase activity"/>
    <property type="evidence" value="ECO:0007669"/>
    <property type="project" value="UniProtKB-UniRule"/>
</dbReference>
<dbReference type="GO" id="GO:0008270">
    <property type="term" value="F:zinc ion binding"/>
    <property type="evidence" value="ECO:0007669"/>
    <property type="project" value="UniProtKB-UniRule"/>
</dbReference>
<dbReference type="GO" id="GO:0019518">
    <property type="term" value="P:L-threonine catabolic process to glycine"/>
    <property type="evidence" value="ECO:0007669"/>
    <property type="project" value="UniProtKB-UniPathway"/>
</dbReference>
<dbReference type="Gene3D" id="3.90.180.10">
    <property type="entry name" value="Medium-chain alcohol dehydrogenases, catalytic domain"/>
    <property type="match status" value="1"/>
</dbReference>
<dbReference type="Gene3D" id="3.40.50.720">
    <property type="entry name" value="NAD(P)-binding Rossmann-like Domain"/>
    <property type="match status" value="1"/>
</dbReference>
<dbReference type="HAMAP" id="MF_00627">
    <property type="entry name" value="Thr_dehydrog"/>
    <property type="match status" value="1"/>
</dbReference>
<dbReference type="InterPro" id="IPR013149">
    <property type="entry name" value="ADH-like_C"/>
</dbReference>
<dbReference type="InterPro" id="IPR013154">
    <property type="entry name" value="ADH-like_N"/>
</dbReference>
<dbReference type="InterPro" id="IPR002328">
    <property type="entry name" value="ADH_Zn_CS"/>
</dbReference>
<dbReference type="InterPro" id="IPR011032">
    <property type="entry name" value="GroES-like_sf"/>
</dbReference>
<dbReference type="InterPro" id="IPR004627">
    <property type="entry name" value="L-Threonine_3-DHase"/>
</dbReference>
<dbReference type="InterPro" id="IPR036291">
    <property type="entry name" value="NAD(P)-bd_dom_sf"/>
</dbReference>
<dbReference type="InterPro" id="IPR020843">
    <property type="entry name" value="PKS_ER"/>
</dbReference>
<dbReference type="InterPro" id="IPR050129">
    <property type="entry name" value="Zn_alcohol_dh"/>
</dbReference>
<dbReference type="NCBIfam" id="NF003808">
    <property type="entry name" value="PRK05396.1"/>
    <property type="match status" value="1"/>
</dbReference>
<dbReference type="NCBIfam" id="TIGR00692">
    <property type="entry name" value="tdh"/>
    <property type="match status" value="1"/>
</dbReference>
<dbReference type="PANTHER" id="PTHR43401">
    <property type="entry name" value="L-THREONINE 3-DEHYDROGENASE"/>
    <property type="match status" value="1"/>
</dbReference>
<dbReference type="PANTHER" id="PTHR43401:SF2">
    <property type="entry name" value="L-THREONINE 3-DEHYDROGENASE"/>
    <property type="match status" value="1"/>
</dbReference>
<dbReference type="Pfam" id="PF08240">
    <property type="entry name" value="ADH_N"/>
    <property type="match status" value="1"/>
</dbReference>
<dbReference type="Pfam" id="PF00107">
    <property type="entry name" value="ADH_zinc_N"/>
    <property type="match status" value="1"/>
</dbReference>
<dbReference type="SMART" id="SM00829">
    <property type="entry name" value="PKS_ER"/>
    <property type="match status" value="1"/>
</dbReference>
<dbReference type="SUPFAM" id="SSF50129">
    <property type="entry name" value="GroES-like"/>
    <property type="match status" value="1"/>
</dbReference>
<dbReference type="SUPFAM" id="SSF51735">
    <property type="entry name" value="NAD(P)-binding Rossmann-fold domains"/>
    <property type="match status" value="1"/>
</dbReference>
<dbReference type="PROSITE" id="PS00059">
    <property type="entry name" value="ADH_ZINC"/>
    <property type="match status" value="1"/>
</dbReference>
<organism>
    <name type="scientific">Burkholderia vietnamiensis (strain G4 / LMG 22486)</name>
    <name type="common">Burkholderia cepacia (strain R1808)</name>
    <dbReference type="NCBI Taxonomy" id="269482"/>
    <lineage>
        <taxon>Bacteria</taxon>
        <taxon>Pseudomonadati</taxon>
        <taxon>Pseudomonadota</taxon>
        <taxon>Betaproteobacteria</taxon>
        <taxon>Burkholderiales</taxon>
        <taxon>Burkholderiaceae</taxon>
        <taxon>Burkholderia</taxon>
        <taxon>Burkholderia cepacia complex</taxon>
    </lineage>
</organism>